<accession>P0A030</accession>
<accession>P45498</accession>
<feature type="chain" id="PRO_0000114384" description="Cell division protein FtsZ">
    <location>
        <begin position="1"/>
        <end position="390"/>
    </location>
</feature>
<feature type="region of interest" description="Disordered" evidence="2">
    <location>
        <begin position="315"/>
        <end position="390"/>
    </location>
</feature>
<feature type="compositionally biased region" description="Polar residues" evidence="2">
    <location>
        <begin position="326"/>
        <end position="360"/>
    </location>
</feature>
<feature type="compositionally biased region" description="Basic and acidic residues" evidence="2">
    <location>
        <begin position="361"/>
        <end position="384"/>
    </location>
</feature>
<feature type="binding site" evidence="1">
    <location>
        <begin position="21"/>
        <end position="25"/>
    </location>
    <ligand>
        <name>GTP</name>
        <dbReference type="ChEBI" id="CHEBI:37565"/>
    </ligand>
</feature>
<feature type="binding site" evidence="1">
    <location>
        <begin position="108"/>
        <end position="110"/>
    </location>
    <ligand>
        <name>GTP</name>
        <dbReference type="ChEBI" id="CHEBI:37565"/>
    </ligand>
</feature>
<feature type="binding site" evidence="1">
    <location>
        <position position="139"/>
    </location>
    <ligand>
        <name>GTP</name>
        <dbReference type="ChEBI" id="CHEBI:37565"/>
    </ligand>
</feature>
<feature type="binding site" evidence="1">
    <location>
        <position position="143"/>
    </location>
    <ligand>
        <name>GTP</name>
        <dbReference type="ChEBI" id="CHEBI:37565"/>
    </ligand>
</feature>
<feature type="binding site" evidence="1">
    <location>
        <position position="187"/>
    </location>
    <ligand>
        <name>GTP</name>
        <dbReference type="ChEBI" id="CHEBI:37565"/>
    </ligand>
</feature>
<comment type="function">
    <text evidence="1">Essential cell division protein that forms a contractile ring structure (Z ring) at the future cell division site. The regulation of the ring assembly controls the timing and the location of cell division. One of the functions of the FtsZ ring is to recruit other cell division proteins to the septum to produce a new cell wall between the dividing cells. Binds GTP and shows GTPase activity.</text>
</comment>
<comment type="subunit">
    <text evidence="1">Homodimer. Polymerizes to form a dynamic ring structure in a strictly GTP-dependent manner. Interacts directly with several other division proteins.</text>
</comment>
<comment type="subcellular location">
    <subcellularLocation>
        <location evidence="1">Cytoplasm</location>
    </subcellularLocation>
    <text evidence="1">Assembles at midcell at the inner surface of the cytoplasmic membrane.</text>
</comment>
<comment type="similarity">
    <text evidence="1">Belongs to the FtsZ family.</text>
</comment>
<reference key="1">
    <citation type="journal article" date="2002" name="Lancet">
        <title>Genome and virulence determinants of high virulence community-acquired MRSA.</title>
        <authorList>
            <person name="Baba T."/>
            <person name="Takeuchi F."/>
            <person name="Kuroda M."/>
            <person name="Yuzawa H."/>
            <person name="Aoki K."/>
            <person name="Oguchi A."/>
            <person name="Nagai Y."/>
            <person name="Iwama N."/>
            <person name="Asano K."/>
            <person name="Naimi T."/>
            <person name="Kuroda H."/>
            <person name="Cui L."/>
            <person name="Yamamoto K."/>
            <person name="Hiramatsu K."/>
        </authorList>
    </citation>
    <scope>NUCLEOTIDE SEQUENCE [LARGE SCALE GENOMIC DNA]</scope>
    <source>
        <strain>MW2</strain>
    </source>
</reference>
<gene>
    <name evidence="1" type="primary">ftsZ</name>
    <name type="ordered locus">MW1069</name>
</gene>
<evidence type="ECO:0000255" key="1">
    <source>
        <dbReference type="HAMAP-Rule" id="MF_00909"/>
    </source>
</evidence>
<evidence type="ECO:0000256" key="2">
    <source>
        <dbReference type="SAM" id="MobiDB-lite"/>
    </source>
</evidence>
<proteinExistence type="inferred from homology"/>
<sequence length="390" mass="41037">MLEFEQGFNHLATLKVIGVGGGGNNAVNRMIDHGMNNVEFIAINTDGQALNLSKAESKIQIGEKLTRGLGAGANPEIGKKAAEESREQIEDAIQGADMVFVTSGMGGGTGTGAAPVVAKIAKEMGALTVGVVTRPFSFEGRKRQTQAAAGVEAMKAAVDTLIVIPNDRLLDIVDKSTPMMEAFKEADNVLRQGVQGISDLIAVSGEVNLDFADVKTIMSNQGSALMGIGVSSGENRAVEAAKKAISSPLLETSIVGAQGVLMNITGGESLSLFEAQEAADIVQDAADEDVNMIFGTVINPELQDEIVVTVIATGFDDKPTSHGRKSGSTGFGTSVNTSSNATSKDESFTSNSSNAQATDSVSERTHTTKEDDIPSFIRNREERRSRRTRR</sequence>
<organism>
    <name type="scientific">Staphylococcus aureus (strain MW2)</name>
    <dbReference type="NCBI Taxonomy" id="196620"/>
    <lineage>
        <taxon>Bacteria</taxon>
        <taxon>Bacillati</taxon>
        <taxon>Bacillota</taxon>
        <taxon>Bacilli</taxon>
        <taxon>Bacillales</taxon>
        <taxon>Staphylococcaceae</taxon>
        <taxon>Staphylococcus</taxon>
    </lineage>
</organism>
<dbReference type="EMBL" id="BA000033">
    <property type="protein sequence ID" value="BAB94934.1"/>
    <property type="molecule type" value="Genomic_DNA"/>
</dbReference>
<dbReference type="RefSeq" id="WP_000888997.1">
    <property type="nucleotide sequence ID" value="NC_003923.1"/>
</dbReference>
<dbReference type="SMR" id="P0A030"/>
<dbReference type="GeneID" id="98345502"/>
<dbReference type="KEGG" id="sam:MW1069"/>
<dbReference type="HOGENOM" id="CLU_024865_0_1_9"/>
<dbReference type="GO" id="GO:0032153">
    <property type="term" value="C:cell division site"/>
    <property type="evidence" value="ECO:0007669"/>
    <property type="project" value="UniProtKB-UniRule"/>
</dbReference>
<dbReference type="GO" id="GO:0005737">
    <property type="term" value="C:cytoplasm"/>
    <property type="evidence" value="ECO:0007669"/>
    <property type="project" value="UniProtKB-SubCell"/>
</dbReference>
<dbReference type="GO" id="GO:0005525">
    <property type="term" value="F:GTP binding"/>
    <property type="evidence" value="ECO:0007669"/>
    <property type="project" value="UniProtKB-UniRule"/>
</dbReference>
<dbReference type="GO" id="GO:0003924">
    <property type="term" value="F:GTPase activity"/>
    <property type="evidence" value="ECO:0007669"/>
    <property type="project" value="UniProtKB-UniRule"/>
</dbReference>
<dbReference type="GO" id="GO:0000917">
    <property type="term" value="P:division septum assembly"/>
    <property type="evidence" value="ECO:0007669"/>
    <property type="project" value="UniProtKB-KW"/>
</dbReference>
<dbReference type="GO" id="GO:0043093">
    <property type="term" value="P:FtsZ-dependent cytokinesis"/>
    <property type="evidence" value="ECO:0007669"/>
    <property type="project" value="UniProtKB-UniRule"/>
</dbReference>
<dbReference type="GO" id="GO:0051258">
    <property type="term" value="P:protein polymerization"/>
    <property type="evidence" value="ECO:0007669"/>
    <property type="project" value="UniProtKB-UniRule"/>
</dbReference>
<dbReference type="CDD" id="cd02201">
    <property type="entry name" value="FtsZ_type1"/>
    <property type="match status" value="1"/>
</dbReference>
<dbReference type="FunFam" id="3.30.1330.20:FF:000005">
    <property type="entry name" value="Cell division protein FtsZ"/>
    <property type="match status" value="1"/>
</dbReference>
<dbReference type="FunFam" id="3.40.50.1440:FF:000023">
    <property type="entry name" value="Cell division protein FtsZ"/>
    <property type="match status" value="1"/>
</dbReference>
<dbReference type="Gene3D" id="3.30.1330.20">
    <property type="entry name" value="Tubulin/FtsZ, C-terminal domain"/>
    <property type="match status" value="1"/>
</dbReference>
<dbReference type="Gene3D" id="3.40.50.1440">
    <property type="entry name" value="Tubulin/FtsZ, GTPase domain"/>
    <property type="match status" value="1"/>
</dbReference>
<dbReference type="HAMAP" id="MF_00909">
    <property type="entry name" value="FtsZ"/>
    <property type="match status" value="1"/>
</dbReference>
<dbReference type="InterPro" id="IPR000158">
    <property type="entry name" value="Cell_div_FtsZ"/>
</dbReference>
<dbReference type="InterPro" id="IPR020805">
    <property type="entry name" value="Cell_div_FtsZ_CS"/>
</dbReference>
<dbReference type="InterPro" id="IPR045061">
    <property type="entry name" value="FtsZ/CetZ"/>
</dbReference>
<dbReference type="InterPro" id="IPR024757">
    <property type="entry name" value="FtsZ_C"/>
</dbReference>
<dbReference type="InterPro" id="IPR008280">
    <property type="entry name" value="Tub_FtsZ_C"/>
</dbReference>
<dbReference type="InterPro" id="IPR037103">
    <property type="entry name" value="Tubulin/FtsZ-like_C"/>
</dbReference>
<dbReference type="InterPro" id="IPR018316">
    <property type="entry name" value="Tubulin/FtsZ_2-layer-sand-dom"/>
</dbReference>
<dbReference type="InterPro" id="IPR036525">
    <property type="entry name" value="Tubulin/FtsZ_GTPase_sf"/>
</dbReference>
<dbReference type="InterPro" id="IPR003008">
    <property type="entry name" value="Tubulin_FtsZ_GTPase"/>
</dbReference>
<dbReference type="NCBIfam" id="TIGR00065">
    <property type="entry name" value="ftsZ"/>
    <property type="match status" value="1"/>
</dbReference>
<dbReference type="PANTHER" id="PTHR30314">
    <property type="entry name" value="CELL DIVISION PROTEIN FTSZ-RELATED"/>
    <property type="match status" value="1"/>
</dbReference>
<dbReference type="PANTHER" id="PTHR30314:SF3">
    <property type="entry name" value="MITOCHONDRIAL DIVISION PROTEIN FSZA"/>
    <property type="match status" value="1"/>
</dbReference>
<dbReference type="Pfam" id="PF12327">
    <property type="entry name" value="FtsZ_C"/>
    <property type="match status" value="1"/>
</dbReference>
<dbReference type="Pfam" id="PF00091">
    <property type="entry name" value="Tubulin"/>
    <property type="match status" value="1"/>
</dbReference>
<dbReference type="PRINTS" id="PR00423">
    <property type="entry name" value="CELLDVISFTSZ"/>
</dbReference>
<dbReference type="SMART" id="SM00864">
    <property type="entry name" value="Tubulin"/>
    <property type="match status" value="1"/>
</dbReference>
<dbReference type="SMART" id="SM00865">
    <property type="entry name" value="Tubulin_C"/>
    <property type="match status" value="1"/>
</dbReference>
<dbReference type="SUPFAM" id="SSF55307">
    <property type="entry name" value="Tubulin C-terminal domain-like"/>
    <property type="match status" value="1"/>
</dbReference>
<dbReference type="SUPFAM" id="SSF52490">
    <property type="entry name" value="Tubulin nucleotide-binding domain-like"/>
    <property type="match status" value="1"/>
</dbReference>
<dbReference type="PROSITE" id="PS01134">
    <property type="entry name" value="FTSZ_1"/>
    <property type="match status" value="1"/>
</dbReference>
<dbReference type="PROSITE" id="PS01135">
    <property type="entry name" value="FTSZ_2"/>
    <property type="match status" value="1"/>
</dbReference>
<protein>
    <recommendedName>
        <fullName evidence="1">Cell division protein FtsZ</fullName>
    </recommendedName>
</protein>
<keyword id="KW-0131">Cell cycle</keyword>
<keyword id="KW-0132">Cell division</keyword>
<keyword id="KW-0963">Cytoplasm</keyword>
<keyword id="KW-0342">GTP-binding</keyword>
<keyword id="KW-0547">Nucleotide-binding</keyword>
<keyword id="KW-0717">Septation</keyword>
<name>FTSZ_STAAW</name>